<organism>
    <name type="scientific">Prochlorococcus marinus (strain MIT 9303)</name>
    <dbReference type="NCBI Taxonomy" id="59922"/>
    <lineage>
        <taxon>Bacteria</taxon>
        <taxon>Bacillati</taxon>
        <taxon>Cyanobacteriota</taxon>
        <taxon>Cyanophyceae</taxon>
        <taxon>Synechococcales</taxon>
        <taxon>Prochlorococcaceae</taxon>
        <taxon>Prochlorococcus</taxon>
    </lineage>
</organism>
<sequence>MSQQPYYETMYILRPDIPEEEVETHVTKYREMVTEAGAEVLDNQMRGKRRLAYPISNHKEGIYVQLSHNGNGQQVAVLEKAMRLSEDVIRYLTVKQEGPLPAPRIVPGSEPEPVEQQEAAAVEA</sequence>
<protein>
    <recommendedName>
        <fullName evidence="1">Small ribosomal subunit protein bS6</fullName>
    </recommendedName>
    <alternativeName>
        <fullName evidence="3">30S ribosomal protein S6</fullName>
    </alternativeName>
</protein>
<dbReference type="EMBL" id="CP000554">
    <property type="protein sequence ID" value="ABM79737.1"/>
    <property type="molecule type" value="Genomic_DNA"/>
</dbReference>
<dbReference type="RefSeq" id="WP_011827575.1">
    <property type="nucleotide sequence ID" value="NC_008820.1"/>
</dbReference>
<dbReference type="SMR" id="A2CE27"/>
<dbReference type="STRING" id="59922.P9303_30071"/>
<dbReference type="KEGG" id="pmf:P9303_30071"/>
<dbReference type="HOGENOM" id="CLU_113441_4_2_3"/>
<dbReference type="BioCyc" id="PMAR59922:G1G80-2641-MONOMER"/>
<dbReference type="Proteomes" id="UP000002274">
    <property type="component" value="Chromosome"/>
</dbReference>
<dbReference type="GO" id="GO:0005737">
    <property type="term" value="C:cytoplasm"/>
    <property type="evidence" value="ECO:0007669"/>
    <property type="project" value="UniProtKB-ARBA"/>
</dbReference>
<dbReference type="GO" id="GO:1990904">
    <property type="term" value="C:ribonucleoprotein complex"/>
    <property type="evidence" value="ECO:0007669"/>
    <property type="project" value="UniProtKB-KW"/>
</dbReference>
<dbReference type="GO" id="GO:0005840">
    <property type="term" value="C:ribosome"/>
    <property type="evidence" value="ECO:0007669"/>
    <property type="project" value="UniProtKB-KW"/>
</dbReference>
<dbReference type="GO" id="GO:0070181">
    <property type="term" value="F:small ribosomal subunit rRNA binding"/>
    <property type="evidence" value="ECO:0007669"/>
    <property type="project" value="TreeGrafter"/>
</dbReference>
<dbReference type="GO" id="GO:0003735">
    <property type="term" value="F:structural constituent of ribosome"/>
    <property type="evidence" value="ECO:0007669"/>
    <property type="project" value="InterPro"/>
</dbReference>
<dbReference type="GO" id="GO:0006412">
    <property type="term" value="P:translation"/>
    <property type="evidence" value="ECO:0007669"/>
    <property type="project" value="UniProtKB-UniRule"/>
</dbReference>
<dbReference type="CDD" id="cd15487">
    <property type="entry name" value="bS6_chloro_cyano"/>
    <property type="match status" value="1"/>
</dbReference>
<dbReference type="Gene3D" id="3.30.70.60">
    <property type="match status" value="1"/>
</dbReference>
<dbReference type="HAMAP" id="MF_00360">
    <property type="entry name" value="Ribosomal_bS6"/>
    <property type="match status" value="1"/>
</dbReference>
<dbReference type="InterPro" id="IPR000529">
    <property type="entry name" value="Ribosomal_bS6"/>
</dbReference>
<dbReference type="InterPro" id="IPR020815">
    <property type="entry name" value="Ribosomal_bS6_CS"/>
</dbReference>
<dbReference type="InterPro" id="IPR035980">
    <property type="entry name" value="Ribosomal_bS6_sf"/>
</dbReference>
<dbReference type="InterPro" id="IPR020814">
    <property type="entry name" value="Ribosomal_S6_plastid/chlpt"/>
</dbReference>
<dbReference type="InterPro" id="IPR014717">
    <property type="entry name" value="Transl_elong_EF1B/ribsomal_bS6"/>
</dbReference>
<dbReference type="NCBIfam" id="TIGR00166">
    <property type="entry name" value="S6"/>
    <property type="match status" value="1"/>
</dbReference>
<dbReference type="PANTHER" id="PTHR21011">
    <property type="entry name" value="MITOCHONDRIAL 28S RIBOSOMAL PROTEIN S6"/>
    <property type="match status" value="1"/>
</dbReference>
<dbReference type="PANTHER" id="PTHR21011:SF1">
    <property type="entry name" value="SMALL RIBOSOMAL SUBUNIT PROTEIN BS6M"/>
    <property type="match status" value="1"/>
</dbReference>
<dbReference type="Pfam" id="PF01250">
    <property type="entry name" value="Ribosomal_S6"/>
    <property type="match status" value="1"/>
</dbReference>
<dbReference type="SUPFAM" id="SSF54995">
    <property type="entry name" value="Ribosomal protein S6"/>
    <property type="match status" value="1"/>
</dbReference>
<dbReference type="PROSITE" id="PS01048">
    <property type="entry name" value="RIBOSOMAL_S6"/>
    <property type="match status" value="1"/>
</dbReference>
<name>RS6_PROM3</name>
<gene>
    <name evidence="1" type="primary">rpsF</name>
    <name evidence="1" type="synonym">rps6</name>
    <name type="ordered locus">P9303_30071</name>
</gene>
<feature type="chain" id="PRO_1000005314" description="Small ribosomal subunit protein bS6">
    <location>
        <begin position="1"/>
        <end position="124"/>
    </location>
</feature>
<feature type="region of interest" description="Disordered" evidence="2">
    <location>
        <begin position="99"/>
        <end position="124"/>
    </location>
</feature>
<feature type="compositionally biased region" description="Low complexity" evidence="2">
    <location>
        <begin position="114"/>
        <end position="124"/>
    </location>
</feature>
<proteinExistence type="inferred from homology"/>
<keyword id="KW-0687">Ribonucleoprotein</keyword>
<keyword id="KW-0689">Ribosomal protein</keyword>
<keyword id="KW-0694">RNA-binding</keyword>
<keyword id="KW-0699">rRNA-binding</keyword>
<accession>A2CE27</accession>
<comment type="function">
    <text evidence="1">Binds together with bS18 to 16S ribosomal RNA.</text>
</comment>
<comment type="similarity">
    <text evidence="1">Belongs to the bacterial ribosomal protein bS6 family.</text>
</comment>
<reference key="1">
    <citation type="journal article" date="2007" name="PLoS Genet.">
        <title>Patterns and implications of gene gain and loss in the evolution of Prochlorococcus.</title>
        <authorList>
            <person name="Kettler G.C."/>
            <person name="Martiny A.C."/>
            <person name="Huang K."/>
            <person name="Zucker J."/>
            <person name="Coleman M.L."/>
            <person name="Rodrigue S."/>
            <person name="Chen F."/>
            <person name="Lapidus A."/>
            <person name="Ferriera S."/>
            <person name="Johnson J."/>
            <person name="Steglich C."/>
            <person name="Church G.M."/>
            <person name="Richardson P."/>
            <person name="Chisholm S.W."/>
        </authorList>
    </citation>
    <scope>NUCLEOTIDE SEQUENCE [LARGE SCALE GENOMIC DNA]</scope>
    <source>
        <strain>MIT 9303</strain>
    </source>
</reference>
<evidence type="ECO:0000255" key="1">
    <source>
        <dbReference type="HAMAP-Rule" id="MF_00360"/>
    </source>
</evidence>
<evidence type="ECO:0000256" key="2">
    <source>
        <dbReference type="SAM" id="MobiDB-lite"/>
    </source>
</evidence>
<evidence type="ECO:0000305" key="3"/>